<dbReference type="EC" id="2.7.1.21" evidence="1"/>
<dbReference type="EMBL" id="AF222894">
    <property type="protein sequence ID" value="AAF31008.1"/>
    <property type="molecule type" value="Genomic_DNA"/>
</dbReference>
<dbReference type="RefSeq" id="WP_006688765.1">
    <property type="nucleotide sequence ID" value="NC_002162.1"/>
</dbReference>
<dbReference type="PDB" id="2B8T">
    <property type="method" value="X-ray"/>
    <property type="resolution" value="2.00 A"/>
    <property type="chains" value="A/B/C/D=1-223"/>
</dbReference>
<dbReference type="PDB" id="2UZ3">
    <property type="method" value="X-ray"/>
    <property type="resolution" value="2.50 A"/>
    <property type="chains" value="A/B/C/D=1-223"/>
</dbReference>
<dbReference type="PDBsum" id="2B8T"/>
<dbReference type="PDBsum" id="2UZ3"/>
<dbReference type="SMR" id="Q9PPP5"/>
<dbReference type="STRING" id="273119.UU594"/>
<dbReference type="BindingDB" id="Q9PPP5"/>
<dbReference type="ChEMBL" id="CHEMBL1075130"/>
<dbReference type="DrugBank" id="DB02452">
    <property type="generic name" value="Thymidine 5'-triphosphate"/>
</dbReference>
<dbReference type="DrugCentral" id="Q9PPP5"/>
<dbReference type="EnsemblBacteria" id="AAF31008">
    <property type="protein sequence ID" value="AAF31008"/>
    <property type="gene ID" value="UU594"/>
</dbReference>
<dbReference type="GeneID" id="29672699"/>
<dbReference type="KEGG" id="uur:UU594"/>
<dbReference type="eggNOG" id="COG1435">
    <property type="taxonomic scope" value="Bacteria"/>
</dbReference>
<dbReference type="HOGENOM" id="CLU_064400_3_0_14"/>
<dbReference type="OrthoDB" id="9781579at2"/>
<dbReference type="BRENDA" id="2.7.1.21">
    <property type="organism ID" value="9209"/>
</dbReference>
<dbReference type="EvolutionaryTrace" id="Q9PPP5"/>
<dbReference type="PRO" id="PR:Q9PPP5"/>
<dbReference type="Proteomes" id="UP000000423">
    <property type="component" value="Chromosome"/>
</dbReference>
<dbReference type="GO" id="GO:0005829">
    <property type="term" value="C:cytosol"/>
    <property type="evidence" value="ECO:0007669"/>
    <property type="project" value="TreeGrafter"/>
</dbReference>
<dbReference type="GO" id="GO:0005524">
    <property type="term" value="F:ATP binding"/>
    <property type="evidence" value="ECO:0007669"/>
    <property type="project" value="UniProtKB-UniRule"/>
</dbReference>
<dbReference type="GO" id="GO:0004797">
    <property type="term" value="F:thymidine kinase activity"/>
    <property type="evidence" value="ECO:0007669"/>
    <property type="project" value="UniProtKB-UniRule"/>
</dbReference>
<dbReference type="GO" id="GO:0008270">
    <property type="term" value="F:zinc ion binding"/>
    <property type="evidence" value="ECO:0007669"/>
    <property type="project" value="UniProtKB-UniRule"/>
</dbReference>
<dbReference type="GO" id="GO:0071897">
    <property type="term" value="P:DNA biosynthetic process"/>
    <property type="evidence" value="ECO:0007669"/>
    <property type="project" value="UniProtKB-KW"/>
</dbReference>
<dbReference type="GO" id="GO:0046104">
    <property type="term" value="P:thymidine metabolic process"/>
    <property type="evidence" value="ECO:0007669"/>
    <property type="project" value="TreeGrafter"/>
</dbReference>
<dbReference type="Gene3D" id="3.30.60.20">
    <property type="match status" value="1"/>
</dbReference>
<dbReference type="Gene3D" id="3.40.50.300">
    <property type="entry name" value="P-loop containing nucleotide triphosphate hydrolases"/>
    <property type="match status" value="1"/>
</dbReference>
<dbReference type="HAMAP" id="MF_00124">
    <property type="entry name" value="Thymidine_kinase"/>
    <property type="match status" value="1"/>
</dbReference>
<dbReference type="InterPro" id="IPR027417">
    <property type="entry name" value="P-loop_NTPase"/>
</dbReference>
<dbReference type="InterPro" id="IPR001267">
    <property type="entry name" value="Thymidine_kinase"/>
</dbReference>
<dbReference type="InterPro" id="IPR020633">
    <property type="entry name" value="Thymidine_kinase_CS"/>
</dbReference>
<dbReference type="NCBIfam" id="NF003296">
    <property type="entry name" value="PRK04296.1-1"/>
    <property type="match status" value="1"/>
</dbReference>
<dbReference type="PANTHER" id="PTHR11441">
    <property type="entry name" value="THYMIDINE KINASE"/>
    <property type="match status" value="1"/>
</dbReference>
<dbReference type="PANTHER" id="PTHR11441:SF0">
    <property type="entry name" value="THYMIDINE KINASE, CYTOSOLIC"/>
    <property type="match status" value="1"/>
</dbReference>
<dbReference type="Pfam" id="PF00265">
    <property type="entry name" value="TK"/>
    <property type="match status" value="1"/>
</dbReference>
<dbReference type="PIRSF" id="PIRSF035805">
    <property type="entry name" value="TK_cell"/>
    <property type="match status" value="1"/>
</dbReference>
<dbReference type="SUPFAM" id="SSF57716">
    <property type="entry name" value="Glucocorticoid receptor-like (DNA-binding domain)"/>
    <property type="match status" value="1"/>
</dbReference>
<dbReference type="SUPFAM" id="SSF52540">
    <property type="entry name" value="P-loop containing nucleoside triphosphate hydrolases"/>
    <property type="match status" value="1"/>
</dbReference>
<dbReference type="PROSITE" id="PS00603">
    <property type="entry name" value="TK_CELLULAR_TYPE"/>
    <property type="match status" value="1"/>
</dbReference>
<organism>
    <name type="scientific">Ureaplasma parvum serovar 3 (strain ATCC 700970)</name>
    <dbReference type="NCBI Taxonomy" id="273119"/>
    <lineage>
        <taxon>Bacteria</taxon>
        <taxon>Bacillati</taxon>
        <taxon>Mycoplasmatota</taxon>
        <taxon>Mycoplasmoidales</taxon>
        <taxon>Mycoplasmoidaceae</taxon>
        <taxon>Ureaplasma</taxon>
    </lineage>
</organism>
<reference key="1">
    <citation type="journal article" date="2000" name="Nature">
        <title>The complete sequence of the mucosal pathogen Ureaplasma urealyticum.</title>
        <authorList>
            <person name="Glass J.I."/>
            <person name="Lefkowitz E.J."/>
            <person name="Glass J.S."/>
            <person name="Heiner C.R."/>
            <person name="Chen E.Y."/>
            <person name="Cassell G.H."/>
        </authorList>
    </citation>
    <scope>NUCLEOTIDE SEQUENCE [LARGE SCALE GENOMIC DNA]</scope>
    <source>
        <strain>ATCC 700970</strain>
    </source>
</reference>
<reference key="2">
    <citation type="journal article" date="2004" name="Proc. Natl. Acad. Sci. U.S.A.">
        <title>Structures of thymidine kinase 1 of human and mycoplasmic origin.</title>
        <authorList>
            <person name="Welin M."/>
            <person name="Kosinska U."/>
            <person name="Mikkelsen N.E."/>
            <person name="Carnrot C."/>
            <person name="Zhu C."/>
            <person name="Wang L."/>
            <person name="Eriksson S."/>
            <person name="Munch-Petersen B."/>
            <person name="Eklund H."/>
        </authorList>
    </citation>
    <scope>X-RAY CRYSTALLOGRAPHY (2.50 ANGSTROMS) IN COMPLEX WITH ZINC IONS AND THYMIDINE</scope>
    <scope>SUBUNIT</scope>
</reference>
<reference key="3">
    <citation type="journal article" date="2005" name="FEBS J.">
        <title>Structure of the substrate complex of thymidine kinase from Ureaplasma urealyticum and investigations of possible drug targets for the enzyme.</title>
        <authorList>
            <person name="Kosinska U."/>
            <person name="Carnrot C."/>
            <person name="Eriksson S."/>
            <person name="Wang L."/>
            <person name="Eklund H."/>
        </authorList>
    </citation>
    <scope>X-RAY CRYSTALLOGRAPHY (2.00 ANGSTROMS) IN COMPLEX WITH ZINC IONS AND THYMIDINE</scope>
    <scope>CATALYTIC ACTIVITY</scope>
    <scope>SUBUNIT</scope>
</reference>
<protein>
    <recommendedName>
        <fullName evidence="1">Thymidine kinase</fullName>
        <ecNumber evidence="1">2.7.1.21</ecNumber>
    </recommendedName>
</protein>
<proteinExistence type="evidence at protein level"/>
<sequence>MAKVNAFSKKIGWIELITGPMFAGKTAELIRRLHRLEYADVKYLVFKPKIDTRSIRNIQSRTGTSLPSVEVESAPEILNYIMSNSFNDETKVIGIDEVQFFDDRICEVANILAENGFVVIISGLDKNFKGEPFGPIAKLFTYADKITKLTAICNECGAEATHSLRKIDGKHADYNDDIVKIGCQEFYSAVCRHHHKVPNRPYLNSNSEEFIKFFKNKKRNKNI</sequence>
<accession>Q9PPP5</accession>
<comment type="catalytic activity">
    <reaction evidence="1 3">
        <text>thymidine + ATP = dTMP + ADP + H(+)</text>
        <dbReference type="Rhea" id="RHEA:19129"/>
        <dbReference type="ChEBI" id="CHEBI:15378"/>
        <dbReference type="ChEBI" id="CHEBI:17748"/>
        <dbReference type="ChEBI" id="CHEBI:30616"/>
        <dbReference type="ChEBI" id="CHEBI:63528"/>
        <dbReference type="ChEBI" id="CHEBI:456216"/>
        <dbReference type="EC" id="2.7.1.21"/>
    </reaction>
</comment>
<comment type="subunit">
    <text evidence="1 2 3">Homotetramer.</text>
</comment>
<comment type="subcellular location">
    <subcellularLocation>
        <location evidence="1">Cytoplasm</location>
    </subcellularLocation>
</comment>
<comment type="similarity">
    <text evidence="1">Belongs to the thymidine kinase family.</text>
</comment>
<name>KITH_UREPA</name>
<evidence type="ECO:0000255" key="1">
    <source>
        <dbReference type="HAMAP-Rule" id="MF_00124"/>
    </source>
</evidence>
<evidence type="ECO:0000269" key="2">
    <source>
    </source>
</evidence>
<evidence type="ECO:0000269" key="3">
    <source>
    </source>
</evidence>
<evidence type="ECO:0007829" key="4">
    <source>
        <dbReference type="PDB" id="2B8T"/>
    </source>
</evidence>
<evidence type="ECO:0007829" key="5">
    <source>
        <dbReference type="PDB" id="2UZ3"/>
    </source>
</evidence>
<gene>
    <name evidence="1" type="primary">tdk</name>
    <name type="ordered locus">UU594</name>
</gene>
<feature type="chain" id="PRO_0000175042" description="Thymidine kinase">
    <location>
        <begin position="1"/>
        <end position="223"/>
    </location>
</feature>
<feature type="active site" description="Proton acceptor" evidence="1">
    <location>
        <position position="97"/>
    </location>
</feature>
<feature type="binding site" evidence="1">
    <location>
        <begin position="19"/>
        <end position="26"/>
    </location>
    <ligand>
        <name>ATP</name>
        <dbReference type="ChEBI" id="CHEBI:30616"/>
    </ligand>
</feature>
<feature type="binding site" evidence="1">
    <location>
        <begin position="96"/>
        <end position="99"/>
    </location>
    <ligand>
        <name>ATP</name>
        <dbReference type="ChEBI" id="CHEBI:30616"/>
    </ligand>
</feature>
<feature type="binding site">
    <location>
        <position position="128"/>
    </location>
    <ligand>
        <name>substrate</name>
    </ligand>
</feature>
<feature type="binding site">
    <location>
        <position position="153"/>
    </location>
    <ligand>
        <name>Zn(2+)</name>
        <dbReference type="ChEBI" id="CHEBI:29105"/>
    </ligand>
</feature>
<feature type="binding site">
    <location>
        <position position="156"/>
    </location>
    <ligand>
        <name>Zn(2+)</name>
        <dbReference type="ChEBI" id="CHEBI:29105"/>
    </ligand>
</feature>
<feature type="binding site">
    <location>
        <begin position="178"/>
        <end position="182"/>
    </location>
    <ligand>
        <name>substrate</name>
    </ligand>
</feature>
<feature type="binding site">
    <location>
        <position position="187"/>
    </location>
    <ligand>
        <name>substrate</name>
    </ligand>
</feature>
<feature type="binding site">
    <location>
        <position position="191"/>
    </location>
    <ligand>
        <name>Zn(2+)</name>
        <dbReference type="ChEBI" id="CHEBI:29105"/>
    </ligand>
</feature>
<feature type="binding site">
    <location>
        <position position="194"/>
    </location>
    <ligand>
        <name>Zn(2+)</name>
        <dbReference type="ChEBI" id="CHEBI:29105"/>
    </ligand>
</feature>
<feature type="strand" evidence="4">
    <location>
        <begin position="13"/>
        <end position="18"/>
    </location>
</feature>
<feature type="helix" evidence="4">
    <location>
        <begin position="25"/>
        <end position="38"/>
    </location>
</feature>
<feature type="strand" evidence="4">
    <location>
        <begin position="43"/>
        <end position="48"/>
    </location>
</feature>
<feature type="helix" evidence="4">
    <location>
        <begin position="52"/>
        <end position="54"/>
    </location>
</feature>
<feature type="strand" evidence="5">
    <location>
        <begin position="61"/>
        <end position="63"/>
    </location>
</feature>
<feature type="strand" evidence="5">
    <location>
        <begin position="65"/>
        <end position="67"/>
    </location>
</feature>
<feature type="strand" evidence="4">
    <location>
        <begin position="69"/>
        <end position="73"/>
    </location>
</feature>
<feature type="helix" evidence="4">
    <location>
        <begin position="75"/>
        <end position="82"/>
    </location>
</feature>
<feature type="strand" evidence="4">
    <location>
        <begin position="92"/>
        <end position="95"/>
    </location>
</feature>
<feature type="helix" evidence="4">
    <location>
        <begin position="98"/>
        <end position="100"/>
    </location>
</feature>
<feature type="helix" evidence="4">
    <location>
        <begin position="105"/>
        <end position="114"/>
    </location>
</feature>
<feature type="strand" evidence="4">
    <location>
        <begin position="118"/>
        <end position="122"/>
    </location>
</feature>
<feature type="strand" evidence="4">
    <location>
        <begin position="130"/>
        <end position="132"/>
    </location>
</feature>
<feature type="helix" evidence="4">
    <location>
        <begin position="136"/>
        <end position="142"/>
    </location>
</feature>
<feature type="strand" evidence="4">
    <location>
        <begin position="144"/>
        <end position="148"/>
    </location>
</feature>
<feature type="turn" evidence="4">
    <location>
        <begin position="154"/>
        <end position="156"/>
    </location>
</feature>
<feature type="strand" evidence="4">
    <location>
        <begin position="158"/>
        <end position="160"/>
    </location>
</feature>
<feature type="strand" evidence="4">
    <location>
        <begin position="162"/>
        <end position="167"/>
    </location>
</feature>
<feature type="turn" evidence="4">
    <location>
        <begin position="184"/>
        <end position="186"/>
    </location>
</feature>
<feature type="strand" evidence="4">
    <location>
        <begin position="187"/>
        <end position="190"/>
    </location>
</feature>
<feature type="helix" evidence="4">
    <location>
        <begin position="192"/>
        <end position="194"/>
    </location>
</feature>
<feature type="helix" evidence="4">
    <location>
        <begin position="207"/>
        <end position="215"/>
    </location>
</feature>
<keyword id="KW-0002">3D-structure</keyword>
<keyword id="KW-0067">ATP-binding</keyword>
<keyword id="KW-0963">Cytoplasm</keyword>
<keyword id="KW-0237">DNA synthesis</keyword>
<keyword id="KW-0418">Kinase</keyword>
<keyword id="KW-0479">Metal-binding</keyword>
<keyword id="KW-0547">Nucleotide-binding</keyword>
<keyword id="KW-1185">Reference proteome</keyword>
<keyword id="KW-0808">Transferase</keyword>
<keyword id="KW-0862">Zinc</keyword>